<keyword id="KW-1185">Reference proteome</keyword>
<keyword id="KW-0687">Ribonucleoprotein</keyword>
<keyword id="KW-0689">Ribosomal protein</keyword>
<keyword id="KW-0694">RNA-binding</keyword>
<keyword id="KW-0699">rRNA-binding</keyword>
<evidence type="ECO:0000255" key="1">
    <source>
        <dbReference type="HAMAP-Rule" id="MF_00531"/>
    </source>
</evidence>
<evidence type="ECO:0000305" key="2"/>
<gene>
    <name evidence="1" type="primary">rpsS</name>
    <name type="ordered locus">CPE2401</name>
</gene>
<feature type="chain" id="PRO_0000129809" description="Small ribosomal subunit protein uS19">
    <location>
        <begin position="1"/>
        <end position="93"/>
    </location>
</feature>
<proteinExistence type="inferred from homology"/>
<accession>Q8XHS7</accession>
<protein>
    <recommendedName>
        <fullName evidence="1">Small ribosomal subunit protein uS19</fullName>
    </recommendedName>
    <alternativeName>
        <fullName evidence="2">30S ribosomal protein S19</fullName>
    </alternativeName>
</protein>
<comment type="function">
    <text evidence="1">Protein S19 forms a complex with S13 that binds strongly to the 16S ribosomal RNA.</text>
</comment>
<comment type="similarity">
    <text evidence="1">Belongs to the universal ribosomal protein uS19 family.</text>
</comment>
<name>RS19_CLOPE</name>
<organism>
    <name type="scientific">Clostridium perfringens (strain 13 / Type A)</name>
    <dbReference type="NCBI Taxonomy" id="195102"/>
    <lineage>
        <taxon>Bacteria</taxon>
        <taxon>Bacillati</taxon>
        <taxon>Bacillota</taxon>
        <taxon>Clostridia</taxon>
        <taxon>Eubacteriales</taxon>
        <taxon>Clostridiaceae</taxon>
        <taxon>Clostridium</taxon>
    </lineage>
</organism>
<reference key="1">
    <citation type="journal article" date="2002" name="Proc. Natl. Acad. Sci. U.S.A.">
        <title>Complete genome sequence of Clostridium perfringens, an anaerobic flesh-eater.</title>
        <authorList>
            <person name="Shimizu T."/>
            <person name="Ohtani K."/>
            <person name="Hirakawa H."/>
            <person name="Ohshima K."/>
            <person name="Yamashita A."/>
            <person name="Shiba T."/>
            <person name="Ogasawara N."/>
            <person name="Hattori M."/>
            <person name="Kuhara S."/>
            <person name="Hayashi H."/>
        </authorList>
    </citation>
    <scope>NUCLEOTIDE SEQUENCE [LARGE SCALE GENOMIC DNA]</scope>
    <source>
        <strain>13 / Type A</strain>
    </source>
</reference>
<sequence>MSRSIKKGPFVHAGLLKKIEEMNQNGDKKVIKTWSRSSTIFPQMIGHTIAVHDGRKHIPVYVTEDMVGHKLGEFVLTRTFKGHIKNEKTSKRK</sequence>
<dbReference type="EMBL" id="BA000016">
    <property type="protein sequence ID" value="BAB82107.1"/>
    <property type="molecule type" value="Genomic_DNA"/>
</dbReference>
<dbReference type="RefSeq" id="WP_003454422.1">
    <property type="nucleotide sequence ID" value="NC_003366.1"/>
</dbReference>
<dbReference type="SMR" id="Q8XHS7"/>
<dbReference type="STRING" id="195102.gene:10491718"/>
<dbReference type="GeneID" id="93001013"/>
<dbReference type="KEGG" id="cpe:CPE2401"/>
<dbReference type="HOGENOM" id="CLU_144911_0_1_9"/>
<dbReference type="Proteomes" id="UP000000818">
    <property type="component" value="Chromosome"/>
</dbReference>
<dbReference type="GO" id="GO:0005737">
    <property type="term" value="C:cytoplasm"/>
    <property type="evidence" value="ECO:0007669"/>
    <property type="project" value="UniProtKB-ARBA"/>
</dbReference>
<dbReference type="GO" id="GO:0015935">
    <property type="term" value="C:small ribosomal subunit"/>
    <property type="evidence" value="ECO:0007669"/>
    <property type="project" value="InterPro"/>
</dbReference>
<dbReference type="GO" id="GO:0019843">
    <property type="term" value="F:rRNA binding"/>
    <property type="evidence" value="ECO:0007669"/>
    <property type="project" value="UniProtKB-UniRule"/>
</dbReference>
<dbReference type="GO" id="GO:0003735">
    <property type="term" value="F:structural constituent of ribosome"/>
    <property type="evidence" value="ECO:0007669"/>
    <property type="project" value="InterPro"/>
</dbReference>
<dbReference type="GO" id="GO:0000028">
    <property type="term" value="P:ribosomal small subunit assembly"/>
    <property type="evidence" value="ECO:0007669"/>
    <property type="project" value="TreeGrafter"/>
</dbReference>
<dbReference type="GO" id="GO:0006412">
    <property type="term" value="P:translation"/>
    <property type="evidence" value="ECO:0007669"/>
    <property type="project" value="UniProtKB-UniRule"/>
</dbReference>
<dbReference type="FunFam" id="3.30.860.10:FF:000001">
    <property type="entry name" value="30S ribosomal protein S19"/>
    <property type="match status" value="1"/>
</dbReference>
<dbReference type="Gene3D" id="3.30.860.10">
    <property type="entry name" value="30s Ribosomal Protein S19, Chain A"/>
    <property type="match status" value="1"/>
</dbReference>
<dbReference type="HAMAP" id="MF_00531">
    <property type="entry name" value="Ribosomal_uS19"/>
    <property type="match status" value="1"/>
</dbReference>
<dbReference type="InterPro" id="IPR002222">
    <property type="entry name" value="Ribosomal_uS19"/>
</dbReference>
<dbReference type="InterPro" id="IPR005732">
    <property type="entry name" value="Ribosomal_uS19_bac-type"/>
</dbReference>
<dbReference type="InterPro" id="IPR020934">
    <property type="entry name" value="Ribosomal_uS19_CS"/>
</dbReference>
<dbReference type="InterPro" id="IPR023575">
    <property type="entry name" value="Ribosomal_uS19_SF"/>
</dbReference>
<dbReference type="NCBIfam" id="TIGR01050">
    <property type="entry name" value="rpsS_bact"/>
    <property type="match status" value="1"/>
</dbReference>
<dbReference type="PANTHER" id="PTHR11880">
    <property type="entry name" value="RIBOSOMAL PROTEIN S19P FAMILY MEMBER"/>
    <property type="match status" value="1"/>
</dbReference>
<dbReference type="PANTHER" id="PTHR11880:SF8">
    <property type="entry name" value="SMALL RIBOSOMAL SUBUNIT PROTEIN US19M"/>
    <property type="match status" value="1"/>
</dbReference>
<dbReference type="Pfam" id="PF00203">
    <property type="entry name" value="Ribosomal_S19"/>
    <property type="match status" value="1"/>
</dbReference>
<dbReference type="PIRSF" id="PIRSF002144">
    <property type="entry name" value="Ribosomal_S19"/>
    <property type="match status" value="1"/>
</dbReference>
<dbReference type="PRINTS" id="PR00975">
    <property type="entry name" value="RIBOSOMALS19"/>
</dbReference>
<dbReference type="SUPFAM" id="SSF54570">
    <property type="entry name" value="Ribosomal protein S19"/>
    <property type="match status" value="1"/>
</dbReference>
<dbReference type="PROSITE" id="PS00323">
    <property type="entry name" value="RIBOSOMAL_S19"/>
    <property type="match status" value="1"/>
</dbReference>